<evidence type="ECO:0000255" key="1">
    <source>
        <dbReference type="HAMAP-Rule" id="MF_01227"/>
    </source>
</evidence>
<organism>
    <name type="scientific">Yersinia pseudotuberculosis serotype I (strain IP32953)</name>
    <dbReference type="NCBI Taxonomy" id="273123"/>
    <lineage>
        <taxon>Bacteria</taxon>
        <taxon>Pseudomonadati</taxon>
        <taxon>Pseudomonadota</taxon>
        <taxon>Gammaproteobacteria</taxon>
        <taxon>Enterobacterales</taxon>
        <taxon>Yersiniaceae</taxon>
        <taxon>Yersinia</taxon>
    </lineage>
</organism>
<reference key="1">
    <citation type="journal article" date="2004" name="Proc. Natl. Acad. Sci. U.S.A.">
        <title>Insights into the evolution of Yersinia pestis through whole-genome comparison with Yersinia pseudotuberculosis.</title>
        <authorList>
            <person name="Chain P.S.G."/>
            <person name="Carniel E."/>
            <person name="Larimer F.W."/>
            <person name="Lamerdin J."/>
            <person name="Stoutland P.O."/>
            <person name="Regala W.M."/>
            <person name="Georgescu A.M."/>
            <person name="Vergez L.M."/>
            <person name="Land M.L."/>
            <person name="Motin V.L."/>
            <person name="Brubaker R.R."/>
            <person name="Fowler J."/>
            <person name="Hinnebusch J."/>
            <person name="Marceau M."/>
            <person name="Medigue C."/>
            <person name="Simonet M."/>
            <person name="Chenal-Francisque V."/>
            <person name="Souza B."/>
            <person name="Dacheux D."/>
            <person name="Elliott J.M."/>
            <person name="Derbise A."/>
            <person name="Hauser L.J."/>
            <person name="Garcia E."/>
        </authorList>
    </citation>
    <scope>NUCLEOTIDE SEQUENCE [LARGE SCALE GENOMIC DNA]</scope>
    <source>
        <strain>IP32953</strain>
    </source>
</reference>
<protein>
    <recommendedName>
        <fullName evidence="1">CTP synthase</fullName>
        <ecNumber evidence="1">6.3.4.2</ecNumber>
    </recommendedName>
    <alternativeName>
        <fullName evidence="1">Cytidine 5'-triphosphate synthase</fullName>
    </alternativeName>
    <alternativeName>
        <fullName evidence="1">Cytidine triphosphate synthetase</fullName>
        <shortName evidence="1">CTP synthetase</shortName>
        <shortName evidence="1">CTPS</shortName>
    </alternativeName>
    <alternativeName>
        <fullName evidence="1">UTP--ammonia ligase</fullName>
    </alternativeName>
</protein>
<name>PYRG_YERPS</name>
<proteinExistence type="inferred from homology"/>
<accession>Q66ED9</accession>
<keyword id="KW-0067">ATP-binding</keyword>
<keyword id="KW-0315">Glutamine amidotransferase</keyword>
<keyword id="KW-0436">Ligase</keyword>
<keyword id="KW-0460">Magnesium</keyword>
<keyword id="KW-0479">Metal-binding</keyword>
<keyword id="KW-0547">Nucleotide-binding</keyword>
<keyword id="KW-0665">Pyrimidine biosynthesis</keyword>
<gene>
    <name evidence="1" type="primary">pyrG</name>
    <name type="ordered locus">YPTB0754</name>
</gene>
<comment type="function">
    <text evidence="1">Catalyzes the ATP-dependent amination of UTP to CTP with either L-glutamine or ammonia as the source of nitrogen. Regulates intracellular CTP levels through interactions with the four ribonucleotide triphosphates.</text>
</comment>
<comment type="catalytic activity">
    <reaction evidence="1">
        <text>UTP + L-glutamine + ATP + H2O = CTP + L-glutamate + ADP + phosphate + 2 H(+)</text>
        <dbReference type="Rhea" id="RHEA:26426"/>
        <dbReference type="ChEBI" id="CHEBI:15377"/>
        <dbReference type="ChEBI" id="CHEBI:15378"/>
        <dbReference type="ChEBI" id="CHEBI:29985"/>
        <dbReference type="ChEBI" id="CHEBI:30616"/>
        <dbReference type="ChEBI" id="CHEBI:37563"/>
        <dbReference type="ChEBI" id="CHEBI:43474"/>
        <dbReference type="ChEBI" id="CHEBI:46398"/>
        <dbReference type="ChEBI" id="CHEBI:58359"/>
        <dbReference type="ChEBI" id="CHEBI:456216"/>
        <dbReference type="EC" id="6.3.4.2"/>
    </reaction>
</comment>
<comment type="catalytic activity">
    <reaction evidence="1">
        <text>L-glutamine + H2O = L-glutamate + NH4(+)</text>
        <dbReference type="Rhea" id="RHEA:15889"/>
        <dbReference type="ChEBI" id="CHEBI:15377"/>
        <dbReference type="ChEBI" id="CHEBI:28938"/>
        <dbReference type="ChEBI" id="CHEBI:29985"/>
        <dbReference type="ChEBI" id="CHEBI:58359"/>
    </reaction>
</comment>
<comment type="catalytic activity">
    <reaction evidence="1">
        <text>UTP + NH4(+) + ATP = CTP + ADP + phosphate + 2 H(+)</text>
        <dbReference type="Rhea" id="RHEA:16597"/>
        <dbReference type="ChEBI" id="CHEBI:15378"/>
        <dbReference type="ChEBI" id="CHEBI:28938"/>
        <dbReference type="ChEBI" id="CHEBI:30616"/>
        <dbReference type="ChEBI" id="CHEBI:37563"/>
        <dbReference type="ChEBI" id="CHEBI:43474"/>
        <dbReference type="ChEBI" id="CHEBI:46398"/>
        <dbReference type="ChEBI" id="CHEBI:456216"/>
    </reaction>
</comment>
<comment type="activity regulation">
    <text evidence="1">Allosterically activated by GTP, when glutamine is the substrate; GTP has no effect on the reaction when ammonia is the substrate. The allosteric effector GTP functions by stabilizing the protein conformation that binds the tetrahedral intermediate(s) formed during glutamine hydrolysis. Inhibited by the product CTP, via allosteric rather than competitive inhibition.</text>
</comment>
<comment type="pathway">
    <text evidence="1">Pyrimidine metabolism; CTP biosynthesis via de novo pathway; CTP from UDP: step 2/2.</text>
</comment>
<comment type="subunit">
    <text evidence="1">Homotetramer.</text>
</comment>
<comment type="miscellaneous">
    <text evidence="1">CTPSs have evolved a hybrid strategy for distinguishing between UTP and CTP. The overlapping regions of the product feedback inhibitory and substrate sites recognize a common feature in both compounds, the triphosphate moiety. To differentiate isosteric substrate and product pyrimidine rings, an additional pocket far from the expected kinase/ligase catalytic site, specifically recognizes the cytosine and ribose portions of the product inhibitor.</text>
</comment>
<comment type="similarity">
    <text evidence="1">Belongs to the CTP synthase family.</text>
</comment>
<sequence>MTTNYIFVTGGVVSSLGKGIAAASLAAILEARGLNVTIMKLDPYINVDPGTMSPTQHGEVFVTEDGAETDLDLGHYERFIRTKMTRRNNFTTGRIYSEVLRKERRGDYLGATIQVIPHITNAIKERIIEGGEGHDVVLVEIGGTVGDIESLPFLEAIRQMAVDVGREHTLYMHLTLVPYLAAAGEVKTKPTQHSVKELLSIGIQPDVLICRSDRAVPANERAKIALFCNVPEKAVISLKDVDSIYKIPGLLKSQGLDDYICKRFSLTCPEANLAEWEQVLYEESNPGGEVTIGMIGKYVELPDAYKSVIEALKHGGLKNRLTVNIKLIDSQDVETRGEEMLKELDAILIPGGFGYRGVEGKVLAARYAREHNIPYLGICLGMQVALMEFARNVAGMENANSTEFVPDCKYPVVALITEWRDEDGNVEIRTEESDLGGTMRVGGQQCHLTEGSLVRQMYGEPTIVERHRHRYEVNNMLLKQIEAAGLRVAGRSADNKLVEIIELPDHPWFVACQFHPEFTSTPRDGHPLFAGFVKAAGDYQKRQVK</sequence>
<feature type="chain" id="PRO_0000266269" description="CTP synthase">
    <location>
        <begin position="1"/>
        <end position="545"/>
    </location>
</feature>
<feature type="domain" description="Glutamine amidotransferase type-1" evidence="1">
    <location>
        <begin position="291"/>
        <end position="542"/>
    </location>
</feature>
<feature type="region of interest" description="Amidoligase domain" evidence="1">
    <location>
        <begin position="1"/>
        <end position="266"/>
    </location>
</feature>
<feature type="active site" description="Nucleophile; for glutamine hydrolysis" evidence="1">
    <location>
        <position position="379"/>
    </location>
</feature>
<feature type="active site" evidence="1">
    <location>
        <position position="515"/>
    </location>
</feature>
<feature type="active site" evidence="1">
    <location>
        <position position="517"/>
    </location>
</feature>
<feature type="binding site" evidence="1">
    <location>
        <position position="14"/>
    </location>
    <ligand>
        <name>CTP</name>
        <dbReference type="ChEBI" id="CHEBI:37563"/>
        <note>allosteric inhibitor</note>
    </ligand>
</feature>
<feature type="binding site" evidence="1">
    <location>
        <position position="14"/>
    </location>
    <ligand>
        <name>UTP</name>
        <dbReference type="ChEBI" id="CHEBI:46398"/>
    </ligand>
</feature>
<feature type="binding site" evidence="1">
    <location>
        <begin position="15"/>
        <end position="20"/>
    </location>
    <ligand>
        <name>ATP</name>
        <dbReference type="ChEBI" id="CHEBI:30616"/>
    </ligand>
</feature>
<feature type="binding site" evidence="1">
    <location>
        <position position="72"/>
    </location>
    <ligand>
        <name>ATP</name>
        <dbReference type="ChEBI" id="CHEBI:30616"/>
    </ligand>
</feature>
<feature type="binding site" evidence="1">
    <location>
        <position position="72"/>
    </location>
    <ligand>
        <name>Mg(2+)</name>
        <dbReference type="ChEBI" id="CHEBI:18420"/>
    </ligand>
</feature>
<feature type="binding site" evidence="1">
    <location>
        <position position="140"/>
    </location>
    <ligand>
        <name>Mg(2+)</name>
        <dbReference type="ChEBI" id="CHEBI:18420"/>
    </ligand>
</feature>
<feature type="binding site" evidence="1">
    <location>
        <begin position="147"/>
        <end position="149"/>
    </location>
    <ligand>
        <name>CTP</name>
        <dbReference type="ChEBI" id="CHEBI:37563"/>
        <note>allosteric inhibitor</note>
    </ligand>
</feature>
<feature type="binding site" evidence="1">
    <location>
        <begin position="187"/>
        <end position="192"/>
    </location>
    <ligand>
        <name>CTP</name>
        <dbReference type="ChEBI" id="CHEBI:37563"/>
        <note>allosteric inhibitor</note>
    </ligand>
</feature>
<feature type="binding site" evidence="1">
    <location>
        <begin position="187"/>
        <end position="192"/>
    </location>
    <ligand>
        <name>UTP</name>
        <dbReference type="ChEBI" id="CHEBI:46398"/>
    </ligand>
</feature>
<feature type="binding site" evidence="1">
    <location>
        <position position="223"/>
    </location>
    <ligand>
        <name>CTP</name>
        <dbReference type="ChEBI" id="CHEBI:37563"/>
        <note>allosteric inhibitor</note>
    </ligand>
</feature>
<feature type="binding site" evidence="1">
    <location>
        <position position="223"/>
    </location>
    <ligand>
        <name>UTP</name>
        <dbReference type="ChEBI" id="CHEBI:46398"/>
    </ligand>
</feature>
<feature type="binding site" evidence="1">
    <location>
        <begin position="239"/>
        <end position="241"/>
    </location>
    <ligand>
        <name>ATP</name>
        <dbReference type="ChEBI" id="CHEBI:30616"/>
    </ligand>
</feature>
<feature type="binding site" evidence="1">
    <location>
        <position position="352"/>
    </location>
    <ligand>
        <name>L-glutamine</name>
        <dbReference type="ChEBI" id="CHEBI:58359"/>
    </ligand>
</feature>
<feature type="binding site" evidence="1">
    <location>
        <begin position="380"/>
        <end position="383"/>
    </location>
    <ligand>
        <name>L-glutamine</name>
        <dbReference type="ChEBI" id="CHEBI:58359"/>
    </ligand>
</feature>
<feature type="binding site" evidence="1">
    <location>
        <position position="403"/>
    </location>
    <ligand>
        <name>L-glutamine</name>
        <dbReference type="ChEBI" id="CHEBI:58359"/>
    </ligand>
</feature>
<feature type="binding site" evidence="1">
    <location>
        <position position="470"/>
    </location>
    <ligand>
        <name>L-glutamine</name>
        <dbReference type="ChEBI" id="CHEBI:58359"/>
    </ligand>
</feature>
<dbReference type="EC" id="6.3.4.2" evidence="1"/>
<dbReference type="EMBL" id="BX936398">
    <property type="protein sequence ID" value="CAH19994.1"/>
    <property type="molecule type" value="Genomic_DNA"/>
</dbReference>
<dbReference type="RefSeq" id="WP_002209376.1">
    <property type="nucleotide sequence ID" value="NZ_CP009712.1"/>
</dbReference>
<dbReference type="SMR" id="Q66ED9"/>
<dbReference type="GeneID" id="96664251"/>
<dbReference type="KEGG" id="ypo:BZ17_1802"/>
<dbReference type="KEGG" id="yps:YPTB0754"/>
<dbReference type="PATRIC" id="fig|273123.14.peg.1907"/>
<dbReference type="UniPathway" id="UPA00159">
    <property type="reaction ID" value="UER00277"/>
</dbReference>
<dbReference type="Proteomes" id="UP000001011">
    <property type="component" value="Chromosome"/>
</dbReference>
<dbReference type="GO" id="GO:0005829">
    <property type="term" value="C:cytosol"/>
    <property type="evidence" value="ECO:0007669"/>
    <property type="project" value="TreeGrafter"/>
</dbReference>
<dbReference type="GO" id="GO:0005524">
    <property type="term" value="F:ATP binding"/>
    <property type="evidence" value="ECO:0007669"/>
    <property type="project" value="UniProtKB-KW"/>
</dbReference>
<dbReference type="GO" id="GO:0003883">
    <property type="term" value="F:CTP synthase activity"/>
    <property type="evidence" value="ECO:0007669"/>
    <property type="project" value="UniProtKB-UniRule"/>
</dbReference>
<dbReference type="GO" id="GO:0004359">
    <property type="term" value="F:glutaminase activity"/>
    <property type="evidence" value="ECO:0007669"/>
    <property type="project" value="RHEA"/>
</dbReference>
<dbReference type="GO" id="GO:0042802">
    <property type="term" value="F:identical protein binding"/>
    <property type="evidence" value="ECO:0007669"/>
    <property type="project" value="TreeGrafter"/>
</dbReference>
<dbReference type="GO" id="GO:0046872">
    <property type="term" value="F:metal ion binding"/>
    <property type="evidence" value="ECO:0007669"/>
    <property type="project" value="UniProtKB-KW"/>
</dbReference>
<dbReference type="GO" id="GO:0044210">
    <property type="term" value="P:'de novo' CTP biosynthetic process"/>
    <property type="evidence" value="ECO:0007669"/>
    <property type="project" value="UniProtKB-UniRule"/>
</dbReference>
<dbReference type="GO" id="GO:0019856">
    <property type="term" value="P:pyrimidine nucleobase biosynthetic process"/>
    <property type="evidence" value="ECO:0007669"/>
    <property type="project" value="TreeGrafter"/>
</dbReference>
<dbReference type="CDD" id="cd03113">
    <property type="entry name" value="CTPS_N"/>
    <property type="match status" value="1"/>
</dbReference>
<dbReference type="CDD" id="cd01746">
    <property type="entry name" value="GATase1_CTP_Synthase"/>
    <property type="match status" value="1"/>
</dbReference>
<dbReference type="FunFam" id="3.40.50.300:FF:000009">
    <property type="entry name" value="CTP synthase"/>
    <property type="match status" value="1"/>
</dbReference>
<dbReference type="FunFam" id="3.40.50.880:FF:000002">
    <property type="entry name" value="CTP synthase"/>
    <property type="match status" value="1"/>
</dbReference>
<dbReference type="Gene3D" id="3.40.50.880">
    <property type="match status" value="1"/>
</dbReference>
<dbReference type="Gene3D" id="3.40.50.300">
    <property type="entry name" value="P-loop containing nucleotide triphosphate hydrolases"/>
    <property type="match status" value="1"/>
</dbReference>
<dbReference type="HAMAP" id="MF_01227">
    <property type="entry name" value="PyrG"/>
    <property type="match status" value="1"/>
</dbReference>
<dbReference type="InterPro" id="IPR029062">
    <property type="entry name" value="Class_I_gatase-like"/>
</dbReference>
<dbReference type="InterPro" id="IPR004468">
    <property type="entry name" value="CTP_synthase"/>
</dbReference>
<dbReference type="InterPro" id="IPR017456">
    <property type="entry name" value="CTP_synthase_N"/>
</dbReference>
<dbReference type="InterPro" id="IPR017926">
    <property type="entry name" value="GATASE"/>
</dbReference>
<dbReference type="InterPro" id="IPR033828">
    <property type="entry name" value="GATase1_CTP_Synthase"/>
</dbReference>
<dbReference type="InterPro" id="IPR027417">
    <property type="entry name" value="P-loop_NTPase"/>
</dbReference>
<dbReference type="NCBIfam" id="NF003792">
    <property type="entry name" value="PRK05380.1"/>
    <property type="match status" value="1"/>
</dbReference>
<dbReference type="NCBIfam" id="TIGR00337">
    <property type="entry name" value="PyrG"/>
    <property type="match status" value="1"/>
</dbReference>
<dbReference type="PANTHER" id="PTHR11550">
    <property type="entry name" value="CTP SYNTHASE"/>
    <property type="match status" value="1"/>
</dbReference>
<dbReference type="PANTHER" id="PTHR11550:SF0">
    <property type="entry name" value="CTP SYNTHASE-RELATED"/>
    <property type="match status" value="1"/>
</dbReference>
<dbReference type="Pfam" id="PF06418">
    <property type="entry name" value="CTP_synth_N"/>
    <property type="match status" value="1"/>
</dbReference>
<dbReference type="Pfam" id="PF00117">
    <property type="entry name" value="GATase"/>
    <property type="match status" value="1"/>
</dbReference>
<dbReference type="SUPFAM" id="SSF52317">
    <property type="entry name" value="Class I glutamine amidotransferase-like"/>
    <property type="match status" value="1"/>
</dbReference>
<dbReference type="SUPFAM" id="SSF52540">
    <property type="entry name" value="P-loop containing nucleoside triphosphate hydrolases"/>
    <property type="match status" value="1"/>
</dbReference>
<dbReference type="PROSITE" id="PS51273">
    <property type="entry name" value="GATASE_TYPE_1"/>
    <property type="match status" value="1"/>
</dbReference>